<protein>
    <recommendedName>
        <fullName evidence="1">Hydroxylamine reductase</fullName>
        <ecNumber evidence="1">1.7.99.1</ecNumber>
    </recommendedName>
    <alternativeName>
        <fullName evidence="1">Hybrid-cluster protein</fullName>
        <shortName evidence="1">HCP</shortName>
    </alternativeName>
    <alternativeName>
        <fullName evidence="1">Prismane protein</fullName>
    </alternativeName>
</protein>
<comment type="function">
    <text evidence="1">Catalyzes the reduction of hydroxylamine to form NH(3) and H(2)O.</text>
</comment>
<comment type="catalytic activity">
    <reaction evidence="1">
        <text>A + NH4(+) + H2O = hydroxylamine + AH2 + H(+)</text>
        <dbReference type="Rhea" id="RHEA:22052"/>
        <dbReference type="ChEBI" id="CHEBI:13193"/>
        <dbReference type="ChEBI" id="CHEBI:15377"/>
        <dbReference type="ChEBI" id="CHEBI:15378"/>
        <dbReference type="ChEBI" id="CHEBI:15429"/>
        <dbReference type="ChEBI" id="CHEBI:17499"/>
        <dbReference type="ChEBI" id="CHEBI:28938"/>
        <dbReference type="EC" id="1.7.99.1"/>
    </reaction>
</comment>
<comment type="cofactor">
    <cofactor evidence="1">
        <name>[4Fe-4S] cluster</name>
        <dbReference type="ChEBI" id="CHEBI:49883"/>
    </cofactor>
    <text evidence="1">Binds 1 [4Fe-4S] cluster.</text>
</comment>
<comment type="cofactor">
    <cofactor evidence="1">
        <name>hybrid [4Fe-2O-2S] cluster</name>
        <dbReference type="ChEBI" id="CHEBI:60519"/>
    </cofactor>
    <text evidence="1">Binds 1 hybrid [4Fe-2O-2S] cluster.</text>
</comment>
<comment type="subcellular location">
    <subcellularLocation>
        <location evidence="1">Cytoplasm</location>
    </subcellularLocation>
</comment>
<comment type="similarity">
    <text evidence="1">Belongs to the HCP family.</text>
</comment>
<proteinExistence type="inferred from homology"/>
<sequence length="549" mass="61290">MKMFCYQCQEALKNTGCTTIGVCGKTADVANLQDLLIFTLKGISFLNLKAREVGVNKEKTDRFLIEGLFSTITNVNFDRNFFLRKIKEAVALRDEIKEDLRNKGVRVDEYKNIDAISWTYGTDADIEAISQEVGVLSTEDEDIRSLRELITYGVKGMAAYAYHAYQLGYKDDNIFKFMEKALAKVLDDSLTVDDYVALAMETGKYGVDTMALLDKANTSTYGHPEITKVNIGVRNNPGILVSGHDLKDLEQLLEQTAGTGVDVYTHGEMLPAHYYPAFKKYPHFVGNYGNAWWQQDKEFELFNGPILMTTNCLIPPKDSYKDRVYTTGVVGFEGVKYIPEGPDGKKDFSEIIEHAKRCKPPVEIERGEIIGGFAHNQVLQLADKIVEAVKTGAIKRFFVMAGCDGRMKSRTYYTEFAKALPKDTVILTAGCAKYRYNKLNLGDIDGIPRVLDAGQCNDSYSLAVIAMKLKEIFGLNDINELPISYNIAWYEQKAVIVLLALLYLGVKNIHLGPTLPAFLSPNVTKVLVEKFGIGGITNVEDDLKMFLGA</sequence>
<dbReference type="EC" id="1.7.99.1" evidence="1"/>
<dbReference type="EMBL" id="AE008691">
    <property type="protein sequence ID" value="AAM25876.1"/>
    <property type="molecule type" value="Genomic_DNA"/>
</dbReference>
<dbReference type="RefSeq" id="WP_041587251.1">
    <property type="nucleotide sequence ID" value="NC_003869.1"/>
</dbReference>
<dbReference type="SMR" id="Q8R6M9"/>
<dbReference type="STRING" id="273068.TTE2772"/>
<dbReference type="KEGG" id="tte:TTE2772"/>
<dbReference type="eggNOG" id="COG1151">
    <property type="taxonomic scope" value="Bacteria"/>
</dbReference>
<dbReference type="HOGENOM" id="CLU_038344_2_0_9"/>
<dbReference type="OrthoDB" id="9761526at2"/>
<dbReference type="Proteomes" id="UP000000555">
    <property type="component" value="Chromosome"/>
</dbReference>
<dbReference type="GO" id="GO:0005737">
    <property type="term" value="C:cytoplasm"/>
    <property type="evidence" value="ECO:0007669"/>
    <property type="project" value="UniProtKB-SubCell"/>
</dbReference>
<dbReference type="GO" id="GO:0051539">
    <property type="term" value="F:4 iron, 4 sulfur cluster binding"/>
    <property type="evidence" value="ECO:0007669"/>
    <property type="project" value="UniProtKB-KW"/>
</dbReference>
<dbReference type="GO" id="GO:0050418">
    <property type="term" value="F:hydroxylamine reductase activity"/>
    <property type="evidence" value="ECO:0007669"/>
    <property type="project" value="UniProtKB-UniRule"/>
</dbReference>
<dbReference type="GO" id="GO:0046872">
    <property type="term" value="F:metal ion binding"/>
    <property type="evidence" value="ECO:0007669"/>
    <property type="project" value="UniProtKB-KW"/>
</dbReference>
<dbReference type="GO" id="GO:0004601">
    <property type="term" value="F:peroxidase activity"/>
    <property type="evidence" value="ECO:0007669"/>
    <property type="project" value="TreeGrafter"/>
</dbReference>
<dbReference type="GO" id="GO:0042542">
    <property type="term" value="P:response to hydrogen peroxide"/>
    <property type="evidence" value="ECO:0007669"/>
    <property type="project" value="TreeGrafter"/>
</dbReference>
<dbReference type="CDD" id="cd01914">
    <property type="entry name" value="HCP"/>
    <property type="match status" value="1"/>
</dbReference>
<dbReference type="FunFam" id="1.20.1270.20:FF:000001">
    <property type="entry name" value="Hydroxylamine reductase"/>
    <property type="match status" value="1"/>
</dbReference>
<dbReference type="FunFam" id="3.40.50.2030:FF:000001">
    <property type="entry name" value="Hydroxylamine reductase"/>
    <property type="match status" value="1"/>
</dbReference>
<dbReference type="FunFam" id="3.40.50.2030:FF:000002">
    <property type="entry name" value="Hydroxylamine reductase"/>
    <property type="match status" value="1"/>
</dbReference>
<dbReference type="Gene3D" id="1.20.1270.20">
    <property type="match status" value="2"/>
</dbReference>
<dbReference type="Gene3D" id="3.40.50.2030">
    <property type="match status" value="2"/>
</dbReference>
<dbReference type="HAMAP" id="MF_00069">
    <property type="entry name" value="Hydroxylam_reduct"/>
    <property type="match status" value="1"/>
</dbReference>
<dbReference type="InterPro" id="IPR004137">
    <property type="entry name" value="HCP/CODH"/>
</dbReference>
<dbReference type="InterPro" id="IPR010048">
    <property type="entry name" value="Hydroxylam_reduct"/>
</dbReference>
<dbReference type="InterPro" id="IPR016099">
    <property type="entry name" value="Prismane-like_a/b-sand"/>
</dbReference>
<dbReference type="InterPro" id="IPR011254">
    <property type="entry name" value="Prismane-like_sf"/>
</dbReference>
<dbReference type="InterPro" id="IPR016100">
    <property type="entry name" value="Prismane_a-bundle"/>
</dbReference>
<dbReference type="NCBIfam" id="TIGR01703">
    <property type="entry name" value="hybrid_clust"/>
    <property type="match status" value="1"/>
</dbReference>
<dbReference type="NCBIfam" id="NF003658">
    <property type="entry name" value="PRK05290.1"/>
    <property type="match status" value="1"/>
</dbReference>
<dbReference type="PANTHER" id="PTHR30109">
    <property type="entry name" value="HYDROXYLAMINE REDUCTASE"/>
    <property type="match status" value="1"/>
</dbReference>
<dbReference type="PANTHER" id="PTHR30109:SF0">
    <property type="entry name" value="HYDROXYLAMINE REDUCTASE"/>
    <property type="match status" value="1"/>
</dbReference>
<dbReference type="Pfam" id="PF03063">
    <property type="entry name" value="Prismane"/>
    <property type="match status" value="1"/>
</dbReference>
<dbReference type="PIRSF" id="PIRSF000076">
    <property type="entry name" value="HCP"/>
    <property type="match status" value="1"/>
</dbReference>
<dbReference type="SUPFAM" id="SSF56821">
    <property type="entry name" value="Prismane protein-like"/>
    <property type="match status" value="1"/>
</dbReference>
<organism>
    <name type="scientific">Caldanaerobacter subterraneus subsp. tengcongensis (strain DSM 15242 / JCM 11007 / NBRC 100824 / MB4)</name>
    <name type="common">Thermoanaerobacter tengcongensis</name>
    <dbReference type="NCBI Taxonomy" id="273068"/>
    <lineage>
        <taxon>Bacteria</taxon>
        <taxon>Bacillati</taxon>
        <taxon>Bacillota</taxon>
        <taxon>Clostridia</taxon>
        <taxon>Thermoanaerobacterales</taxon>
        <taxon>Thermoanaerobacteraceae</taxon>
        <taxon>Caldanaerobacter</taxon>
    </lineage>
</organism>
<accession>Q8R6M9</accession>
<feature type="chain" id="PRO_0000151685" description="Hydroxylamine reductase">
    <location>
        <begin position="1"/>
        <end position="549"/>
    </location>
</feature>
<feature type="binding site" evidence="1">
    <location>
        <position position="5"/>
    </location>
    <ligand>
        <name>[4Fe-4S] cluster</name>
        <dbReference type="ChEBI" id="CHEBI:49883"/>
    </ligand>
</feature>
<feature type="binding site" evidence="1">
    <location>
        <position position="8"/>
    </location>
    <ligand>
        <name>[4Fe-4S] cluster</name>
        <dbReference type="ChEBI" id="CHEBI:49883"/>
    </ligand>
</feature>
<feature type="binding site" evidence="1">
    <location>
        <position position="17"/>
    </location>
    <ligand>
        <name>[4Fe-4S] cluster</name>
        <dbReference type="ChEBI" id="CHEBI:49883"/>
    </ligand>
</feature>
<feature type="binding site" evidence="1">
    <location>
        <position position="23"/>
    </location>
    <ligand>
        <name>[4Fe-4S] cluster</name>
        <dbReference type="ChEBI" id="CHEBI:49883"/>
    </ligand>
</feature>
<feature type="binding site" evidence="1">
    <location>
        <position position="244"/>
    </location>
    <ligand>
        <name>hybrid [4Fe-2O-2S] cluster</name>
        <dbReference type="ChEBI" id="CHEBI:60519"/>
    </ligand>
</feature>
<feature type="binding site" evidence="1">
    <location>
        <position position="268"/>
    </location>
    <ligand>
        <name>hybrid [4Fe-2O-2S] cluster</name>
        <dbReference type="ChEBI" id="CHEBI:60519"/>
    </ligand>
</feature>
<feature type="binding site" evidence="1">
    <location>
        <position position="312"/>
    </location>
    <ligand>
        <name>hybrid [4Fe-2O-2S] cluster</name>
        <dbReference type="ChEBI" id="CHEBI:60519"/>
    </ligand>
</feature>
<feature type="binding site" description="via persulfide group" evidence="1">
    <location>
        <position position="403"/>
    </location>
    <ligand>
        <name>hybrid [4Fe-2O-2S] cluster</name>
        <dbReference type="ChEBI" id="CHEBI:60519"/>
    </ligand>
</feature>
<feature type="binding site" evidence="1">
    <location>
        <position position="431"/>
    </location>
    <ligand>
        <name>hybrid [4Fe-2O-2S] cluster</name>
        <dbReference type="ChEBI" id="CHEBI:60519"/>
    </ligand>
</feature>
<feature type="binding site" evidence="1">
    <location>
        <position position="456"/>
    </location>
    <ligand>
        <name>hybrid [4Fe-2O-2S] cluster</name>
        <dbReference type="ChEBI" id="CHEBI:60519"/>
    </ligand>
</feature>
<feature type="binding site" evidence="1">
    <location>
        <position position="491"/>
    </location>
    <ligand>
        <name>hybrid [4Fe-2O-2S] cluster</name>
        <dbReference type="ChEBI" id="CHEBI:60519"/>
    </ligand>
</feature>
<feature type="binding site" evidence="1">
    <location>
        <position position="493"/>
    </location>
    <ligand>
        <name>hybrid [4Fe-2O-2S] cluster</name>
        <dbReference type="ChEBI" id="CHEBI:60519"/>
    </ligand>
</feature>
<feature type="modified residue" description="Cysteine persulfide" evidence="1">
    <location>
        <position position="403"/>
    </location>
</feature>
<name>HCP_CALS4</name>
<gene>
    <name evidence="1" type="primary">hcp</name>
    <name type="ordered locus">TTE2772</name>
</gene>
<reference key="1">
    <citation type="journal article" date="2002" name="Genome Res.">
        <title>A complete sequence of the T. tengcongensis genome.</title>
        <authorList>
            <person name="Bao Q."/>
            <person name="Tian Y."/>
            <person name="Li W."/>
            <person name="Xu Z."/>
            <person name="Xuan Z."/>
            <person name="Hu S."/>
            <person name="Dong W."/>
            <person name="Yang J."/>
            <person name="Chen Y."/>
            <person name="Xue Y."/>
            <person name="Xu Y."/>
            <person name="Lai X."/>
            <person name="Huang L."/>
            <person name="Dong X."/>
            <person name="Ma Y."/>
            <person name="Ling L."/>
            <person name="Tan H."/>
            <person name="Chen R."/>
            <person name="Wang J."/>
            <person name="Yu J."/>
            <person name="Yang H."/>
        </authorList>
    </citation>
    <scope>NUCLEOTIDE SEQUENCE [LARGE SCALE GENOMIC DNA]</scope>
    <source>
        <strain>DSM 15242 / JCM 11007 / NBRC 100824 / MB4</strain>
    </source>
</reference>
<evidence type="ECO:0000255" key="1">
    <source>
        <dbReference type="HAMAP-Rule" id="MF_00069"/>
    </source>
</evidence>
<keyword id="KW-0004">4Fe-4S</keyword>
<keyword id="KW-0963">Cytoplasm</keyword>
<keyword id="KW-0408">Iron</keyword>
<keyword id="KW-0411">Iron-sulfur</keyword>
<keyword id="KW-0479">Metal-binding</keyword>
<keyword id="KW-0560">Oxidoreductase</keyword>
<keyword id="KW-1185">Reference proteome</keyword>